<protein>
    <recommendedName>
        <fullName evidence="1">ATP synthase subunit b</fullName>
    </recommendedName>
    <alternativeName>
        <fullName evidence="1">ATP synthase F(0) sector subunit b</fullName>
    </alternativeName>
    <alternativeName>
        <fullName evidence="1">ATPase subunit I</fullName>
    </alternativeName>
    <alternativeName>
        <fullName evidence="1">F-type ATPase subunit b</fullName>
        <shortName evidence="1">F-ATPase subunit b</shortName>
    </alternativeName>
</protein>
<evidence type="ECO:0000255" key="1">
    <source>
        <dbReference type="HAMAP-Rule" id="MF_01398"/>
    </source>
</evidence>
<proteinExistence type="inferred from homology"/>
<organism>
    <name type="scientific">Salmonella enteritidis PT4 (strain P125109)</name>
    <dbReference type="NCBI Taxonomy" id="550537"/>
    <lineage>
        <taxon>Bacteria</taxon>
        <taxon>Pseudomonadati</taxon>
        <taxon>Pseudomonadota</taxon>
        <taxon>Gammaproteobacteria</taxon>
        <taxon>Enterobacterales</taxon>
        <taxon>Enterobacteriaceae</taxon>
        <taxon>Salmonella</taxon>
    </lineage>
</organism>
<dbReference type="EMBL" id="AM933172">
    <property type="protein sequence ID" value="CAR35259.1"/>
    <property type="molecule type" value="Genomic_DNA"/>
</dbReference>
<dbReference type="RefSeq" id="WP_001052212.1">
    <property type="nucleotide sequence ID" value="NC_011294.1"/>
</dbReference>
<dbReference type="SMR" id="B5QVD6"/>
<dbReference type="GeneID" id="66758158"/>
<dbReference type="KEGG" id="set:SEN3683"/>
<dbReference type="HOGENOM" id="CLU_079215_4_5_6"/>
<dbReference type="Proteomes" id="UP000000613">
    <property type="component" value="Chromosome"/>
</dbReference>
<dbReference type="GO" id="GO:0005886">
    <property type="term" value="C:plasma membrane"/>
    <property type="evidence" value="ECO:0007669"/>
    <property type="project" value="UniProtKB-SubCell"/>
</dbReference>
<dbReference type="GO" id="GO:0045259">
    <property type="term" value="C:proton-transporting ATP synthase complex"/>
    <property type="evidence" value="ECO:0007669"/>
    <property type="project" value="UniProtKB-KW"/>
</dbReference>
<dbReference type="GO" id="GO:0046933">
    <property type="term" value="F:proton-transporting ATP synthase activity, rotational mechanism"/>
    <property type="evidence" value="ECO:0007669"/>
    <property type="project" value="UniProtKB-UniRule"/>
</dbReference>
<dbReference type="GO" id="GO:0046961">
    <property type="term" value="F:proton-transporting ATPase activity, rotational mechanism"/>
    <property type="evidence" value="ECO:0007669"/>
    <property type="project" value="TreeGrafter"/>
</dbReference>
<dbReference type="CDD" id="cd06503">
    <property type="entry name" value="ATP-synt_Fo_b"/>
    <property type="match status" value="1"/>
</dbReference>
<dbReference type="FunFam" id="1.20.5.620:FF:000001">
    <property type="entry name" value="ATP synthase subunit b"/>
    <property type="match status" value="1"/>
</dbReference>
<dbReference type="Gene3D" id="1.20.5.620">
    <property type="entry name" value="F1F0 ATP synthase subunit B, membrane domain"/>
    <property type="match status" value="1"/>
</dbReference>
<dbReference type="HAMAP" id="MF_01398">
    <property type="entry name" value="ATP_synth_b_bprime"/>
    <property type="match status" value="1"/>
</dbReference>
<dbReference type="InterPro" id="IPR028987">
    <property type="entry name" value="ATP_synth_B-like_membr_sf"/>
</dbReference>
<dbReference type="InterPro" id="IPR002146">
    <property type="entry name" value="ATP_synth_b/b'su_bac/chlpt"/>
</dbReference>
<dbReference type="InterPro" id="IPR005864">
    <property type="entry name" value="ATP_synth_F0_bsu_bac"/>
</dbReference>
<dbReference type="InterPro" id="IPR050059">
    <property type="entry name" value="ATP_synthase_B_chain"/>
</dbReference>
<dbReference type="NCBIfam" id="TIGR01144">
    <property type="entry name" value="ATP_synt_b"/>
    <property type="match status" value="1"/>
</dbReference>
<dbReference type="NCBIfam" id="NF004411">
    <property type="entry name" value="PRK05759.1-2"/>
    <property type="match status" value="1"/>
</dbReference>
<dbReference type="NCBIfam" id="NF004413">
    <property type="entry name" value="PRK05759.1-4"/>
    <property type="match status" value="1"/>
</dbReference>
<dbReference type="PANTHER" id="PTHR33445:SF1">
    <property type="entry name" value="ATP SYNTHASE SUBUNIT B"/>
    <property type="match status" value="1"/>
</dbReference>
<dbReference type="PANTHER" id="PTHR33445">
    <property type="entry name" value="ATP SYNTHASE SUBUNIT B', CHLOROPLASTIC"/>
    <property type="match status" value="1"/>
</dbReference>
<dbReference type="Pfam" id="PF00430">
    <property type="entry name" value="ATP-synt_B"/>
    <property type="match status" value="1"/>
</dbReference>
<dbReference type="SUPFAM" id="SSF81573">
    <property type="entry name" value="F1F0 ATP synthase subunit B, membrane domain"/>
    <property type="match status" value="1"/>
</dbReference>
<reference key="1">
    <citation type="journal article" date="2008" name="Genome Res.">
        <title>Comparative genome analysis of Salmonella enteritidis PT4 and Salmonella gallinarum 287/91 provides insights into evolutionary and host adaptation pathways.</title>
        <authorList>
            <person name="Thomson N.R."/>
            <person name="Clayton D.J."/>
            <person name="Windhorst D."/>
            <person name="Vernikos G."/>
            <person name="Davidson S."/>
            <person name="Churcher C."/>
            <person name="Quail M.A."/>
            <person name="Stevens M."/>
            <person name="Jones M.A."/>
            <person name="Watson M."/>
            <person name="Barron A."/>
            <person name="Layton A."/>
            <person name="Pickard D."/>
            <person name="Kingsley R.A."/>
            <person name="Bignell A."/>
            <person name="Clark L."/>
            <person name="Harris B."/>
            <person name="Ormond D."/>
            <person name="Abdellah Z."/>
            <person name="Brooks K."/>
            <person name="Cherevach I."/>
            <person name="Chillingworth T."/>
            <person name="Woodward J."/>
            <person name="Norberczak H."/>
            <person name="Lord A."/>
            <person name="Arrowsmith C."/>
            <person name="Jagels K."/>
            <person name="Moule S."/>
            <person name="Mungall K."/>
            <person name="Saunders M."/>
            <person name="Whitehead S."/>
            <person name="Chabalgoity J.A."/>
            <person name="Maskell D."/>
            <person name="Humphreys T."/>
            <person name="Roberts M."/>
            <person name="Barrow P.A."/>
            <person name="Dougan G."/>
            <person name="Parkhill J."/>
        </authorList>
    </citation>
    <scope>NUCLEOTIDE SEQUENCE [LARGE SCALE GENOMIC DNA]</scope>
    <source>
        <strain>P125109</strain>
    </source>
</reference>
<keyword id="KW-0066">ATP synthesis</keyword>
<keyword id="KW-0997">Cell inner membrane</keyword>
<keyword id="KW-1003">Cell membrane</keyword>
<keyword id="KW-0138">CF(0)</keyword>
<keyword id="KW-0375">Hydrogen ion transport</keyword>
<keyword id="KW-0406">Ion transport</keyword>
<keyword id="KW-0472">Membrane</keyword>
<keyword id="KW-0812">Transmembrane</keyword>
<keyword id="KW-1133">Transmembrane helix</keyword>
<keyword id="KW-0813">Transport</keyword>
<sequence length="156" mass="17365">MNLNATILGQAIAFILFVWFCMKYVWPPLMAAIEKRQKEIADGLASAERAHKDLDLAKASATDQLKKAKAEAQVIIEQANKRRAQILDEAKTEAEQERTKIVAQAQAEIEAERKRAREELRKQVAILAVAGAEKIIERSVDEAANSDIVDKLVAEL</sequence>
<accession>B5QVD6</accession>
<name>ATPF_SALEP</name>
<comment type="function">
    <text evidence="1">F(1)F(0) ATP synthase produces ATP from ADP in the presence of a proton or sodium gradient. F-type ATPases consist of two structural domains, F(1) containing the extramembraneous catalytic core and F(0) containing the membrane proton channel, linked together by a central stalk and a peripheral stalk. During catalysis, ATP synthesis in the catalytic domain of F(1) is coupled via a rotary mechanism of the central stalk subunits to proton translocation.</text>
</comment>
<comment type="function">
    <text evidence="1">Component of the F(0) channel, it forms part of the peripheral stalk, linking F(1) to F(0).</text>
</comment>
<comment type="subunit">
    <text evidence="1">F-type ATPases have 2 components, F(1) - the catalytic core - and F(0) - the membrane proton channel. F(1) has five subunits: alpha(3), beta(3), gamma(1), delta(1), epsilon(1). F(0) has three main subunits: a(1), b(2) and c(10-14). The alpha and beta chains form an alternating ring which encloses part of the gamma chain. F(1) is attached to F(0) by a central stalk formed by the gamma and epsilon chains, while a peripheral stalk is formed by the delta and b chains.</text>
</comment>
<comment type="subcellular location">
    <subcellularLocation>
        <location evidence="1">Cell inner membrane</location>
        <topology evidence="1">Single-pass membrane protein</topology>
    </subcellularLocation>
</comment>
<comment type="similarity">
    <text evidence="1">Belongs to the ATPase B chain family.</text>
</comment>
<feature type="chain" id="PRO_5000397257" description="ATP synthase subunit b">
    <location>
        <begin position="1"/>
        <end position="156"/>
    </location>
</feature>
<feature type="transmembrane region" description="Helical" evidence="1">
    <location>
        <begin position="11"/>
        <end position="31"/>
    </location>
</feature>
<gene>
    <name evidence="1" type="primary">atpF</name>
    <name type="ordered locus">SEN3683</name>
</gene>